<sequence length="225" mass="25027">MPSKQVGWWTMSEHTNDEVQPTALSGNDAVNRAAEQWKESAHRNIPGLGDLPIPDDTANLREGPNLHDGLLALLPLVGVWRGTGHADTAEEGQYAFGQQITFAHDGENYLTYESRIWKLDDEGNSTDLDYRESGFWRISLKDEIEVVLTHSTGVAEIFYGEPMNERAWQIESASTMVTAQGPATLGPGKRLYGLMPNNNLGWVDERMVDGEMRPRMSAELSRVIG</sequence>
<protein>
    <recommendedName>
        <fullName evidence="2">Ferric nitrobindin-like protein</fullName>
    </recommendedName>
</protein>
<comment type="similarity">
    <text evidence="1">Belongs to the nitrobindin family.</text>
</comment>
<comment type="caution">
    <text evidence="2">Lacks the conserved His residue that binds heme iron in the nitrobindin family.</text>
</comment>
<evidence type="ECO:0000255" key="1">
    <source>
        <dbReference type="HAMAP-Rule" id="MF_01297"/>
    </source>
</evidence>
<evidence type="ECO:0000305" key="2"/>
<name>NBLIK_CORDI</name>
<proteinExistence type="inferred from homology"/>
<organism>
    <name type="scientific">Corynebacterium diphtheriae (strain ATCC 700971 / NCTC 13129 / Biotype gravis)</name>
    <dbReference type="NCBI Taxonomy" id="257309"/>
    <lineage>
        <taxon>Bacteria</taxon>
        <taxon>Bacillati</taxon>
        <taxon>Actinomycetota</taxon>
        <taxon>Actinomycetes</taxon>
        <taxon>Mycobacteriales</taxon>
        <taxon>Corynebacteriaceae</taxon>
        <taxon>Corynebacterium</taxon>
    </lineage>
</organism>
<dbReference type="EMBL" id="BX248359">
    <property type="protein sequence ID" value="CAE50448.1"/>
    <property type="molecule type" value="Genomic_DNA"/>
</dbReference>
<dbReference type="SMR" id="Q6NFH6"/>
<dbReference type="STRING" id="257309.DIP1915"/>
<dbReference type="KEGG" id="cdi:DIP1915"/>
<dbReference type="HOGENOM" id="CLU_085483_0_0_11"/>
<dbReference type="Proteomes" id="UP000002198">
    <property type="component" value="Chromosome"/>
</dbReference>
<dbReference type="CDD" id="cd07828">
    <property type="entry name" value="lipocalin_heme-bd-THAP4-like"/>
    <property type="match status" value="1"/>
</dbReference>
<dbReference type="Gene3D" id="2.40.128.20">
    <property type="match status" value="1"/>
</dbReference>
<dbReference type="HAMAP" id="MF_01297">
    <property type="entry name" value="nitrobindin"/>
    <property type="match status" value="1"/>
</dbReference>
<dbReference type="InterPro" id="IPR012674">
    <property type="entry name" value="Calycin"/>
</dbReference>
<dbReference type="InterPro" id="IPR022939">
    <property type="entry name" value="Nb(III)_bact/plant"/>
</dbReference>
<dbReference type="InterPro" id="IPR045165">
    <property type="entry name" value="Nitrobindin"/>
</dbReference>
<dbReference type="InterPro" id="IPR014878">
    <property type="entry name" value="THAP4-like_heme-bd"/>
</dbReference>
<dbReference type="PANTHER" id="PTHR15854:SF4">
    <property type="entry name" value="PEROXYNITRITE ISOMERASE THAP4"/>
    <property type="match status" value="1"/>
</dbReference>
<dbReference type="PANTHER" id="PTHR15854">
    <property type="entry name" value="THAP4 PROTEIN"/>
    <property type="match status" value="1"/>
</dbReference>
<dbReference type="Pfam" id="PF08768">
    <property type="entry name" value="THAP4_heme-bd"/>
    <property type="match status" value="1"/>
</dbReference>
<dbReference type="SUPFAM" id="SSF50814">
    <property type="entry name" value="Lipocalins"/>
    <property type="match status" value="1"/>
</dbReference>
<gene>
    <name type="ordered locus">DIP1915</name>
</gene>
<feature type="chain" id="PRO_0000356899" description="Ferric nitrobindin-like protein">
    <location>
        <begin position="1"/>
        <end position="225"/>
    </location>
</feature>
<feature type="short sequence motif" description="GXWXGXG" evidence="1">
    <location>
        <begin position="78"/>
        <end position="84"/>
    </location>
</feature>
<accession>Q6NFH6</accession>
<keyword id="KW-1185">Reference proteome</keyword>
<reference key="1">
    <citation type="journal article" date="2003" name="Nucleic Acids Res.">
        <title>The complete genome sequence and analysis of Corynebacterium diphtheriae NCTC13129.</title>
        <authorList>
            <person name="Cerdeno-Tarraga A.-M."/>
            <person name="Efstratiou A."/>
            <person name="Dover L.G."/>
            <person name="Holden M.T.G."/>
            <person name="Pallen M.J."/>
            <person name="Bentley S.D."/>
            <person name="Besra G.S."/>
            <person name="Churcher C.M."/>
            <person name="James K.D."/>
            <person name="De Zoysa A."/>
            <person name="Chillingworth T."/>
            <person name="Cronin A."/>
            <person name="Dowd L."/>
            <person name="Feltwell T."/>
            <person name="Hamlin N."/>
            <person name="Holroyd S."/>
            <person name="Jagels K."/>
            <person name="Moule S."/>
            <person name="Quail M.A."/>
            <person name="Rabbinowitsch E."/>
            <person name="Rutherford K.M."/>
            <person name="Thomson N.R."/>
            <person name="Unwin L."/>
            <person name="Whitehead S."/>
            <person name="Barrell B.G."/>
            <person name="Parkhill J."/>
        </authorList>
    </citation>
    <scope>NUCLEOTIDE SEQUENCE [LARGE SCALE GENOMIC DNA]</scope>
    <source>
        <strain>ATCC 700971 / NCTC 13129 / Biotype gravis</strain>
    </source>
</reference>